<dbReference type="EC" id="7.1.2.2" evidence="1"/>
<dbReference type="EMBL" id="CP001283">
    <property type="protein sequence ID" value="ACK90468.1"/>
    <property type="molecule type" value="Genomic_DNA"/>
</dbReference>
<dbReference type="RefSeq" id="WP_000027518.1">
    <property type="nucleotide sequence ID" value="NC_011773.1"/>
</dbReference>
<dbReference type="SMR" id="B7JGN2"/>
<dbReference type="GeneID" id="93005816"/>
<dbReference type="KEGG" id="bcu:BCAH820_5398"/>
<dbReference type="HOGENOM" id="CLU_010091_2_1_9"/>
<dbReference type="Proteomes" id="UP000001363">
    <property type="component" value="Chromosome"/>
</dbReference>
<dbReference type="GO" id="GO:0005886">
    <property type="term" value="C:plasma membrane"/>
    <property type="evidence" value="ECO:0007669"/>
    <property type="project" value="UniProtKB-SubCell"/>
</dbReference>
<dbReference type="GO" id="GO:0045259">
    <property type="term" value="C:proton-transporting ATP synthase complex"/>
    <property type="evidence" value="ECO:0007669"/>
    <property type="project" value="UniProtKB-KW"/>
</dbReference>
<dbReference type="GO" id="GO:0043531">
    <property type="term" value="F:ADP binding"/>
    <property type="evidence" value="ECO:0007669"/>
    <property type="project" value="TreeGrafter"/>
</dbReference>
<dbReference type="GO" id="GO:0005524">
    <property type="term" value="F:ATP binding"/>
    <property type="evidence" value="ECO:0007669"/>
    <property type="project" value="UniProtKB-UniRule"/>
</dbReference>
<dbReference type="GO" id="GO:0046933">
    <property type="term" value="F:proton-transporting ATP synthase activity, rotational mechanism"/>
    <property type="evidence" value="ECO:0007669"/>
    <property type="project" value="UniProtKB-UniRule"/>
</dbReference>
<dbReference type="CDD" id="cd18113">
    <property type="entry name" value="ATP-synt_F1_alpha_C"/>
    <property type="match status" value="1"/>
</dbReference>
<dbReference type="CDD" id="cd18116">
    <property type="entry name" value="ATP-synt_F1_alpha_N"/>
    <property type="match status" value="1"/>
</dbReference>
<dbReference type="CDD" id="cd01132">
    <property type="entry name" value="F1-ATPase_alpha_CD"/>
    <property type="match status" value="1"/>
</dbReference>
<dbReference type="FunFam" id="1.20.150.20:FF:000001">
    <property type="entry name" value="ATP synthase subunit alpha"/>
    <property type="match status" value="1"/>
</dbReference>
<dbReference type="FunFam" id="2.40.30.20:FF:000001">
    <property type="entry name" value="ATP synthase subunit alpha"/>
    <property type="match status" value="1"/>
</dbReference>
<dbReference type="FunFam" id="3.40.50.300:FF:000002">
    <property type="entry name" value="ATP synthase subunit alpha"/>
    <property type="match status" value="1"/>
</dbReference>
<dbReference type="Gene3D" id="2.40.30.20">
    <property type="match status" value="1"/>
</dbReference>
<dbReference type="Gene3D" id="1.20.150.20">
    <property type="entry name" value="ATP synthase alpha/beta chain, C-terminal domain"/>
    <property type="match status" value="1"/>
</dbReference>
<dbReference type="Gene3D" id="3.40.50.300">
    <property type="entry name" value="P-loop containing nucleotide triphosphate hydrolases"/>
    <property type="match status" value="1"/>
</dbReference>
<dbReference type="HAMAP" id="MF_01346">
    <property type="entry name" value="ATP_synth_alpha_bact"/>
    <property type="match status" value="1"/>
</dbReference>
<dbReference type="InterPro" id="IPR023366">
    <property type="entry name" value="ATP_synth_asu-like_sf"/>
</dbReference>
<dbReference type="InterPro" id="IPR000793">
    <property type="entry name" value="ATP_synth_asu_C"/>
</dbReference>
<dbReference type="InterPro" id="IPR038376">
    <property type="entry name" value="ATP_synth_asu_C_sf"/>
</dbReference>
<dbReference type="InterPro" id="IPR033732">
    <property type="entry name" value="ATP_synth_F1_a_nt-bd_dom"/>
</dbReference>
<dbReference type="InterPro" id="IPR005294">
    <property type="entry name" value="ATP_synth_F1_asu"/>
</dbReference>
<dbReference type="InterPro" id="IPR020003">
    <property type="entry name" value="ATPase_a/bsu_AS"/>
</dbReference>
<dbReference type="InterPro" id="IPR004100">
    <property type="entry name" value="ATPase_F1/V1/A1_a/bsu_N"/>
</dbReference>
<dbReference type="InterPro" id="IPR036121">
    <property type="entry name" value="ATPase_F1/V1/A1_a/bsu_N_sf"/>
</dbReference>
<dbReference type="InterPro" id="IPR000194">
    <property type="entry name" value="ATPase_F1/V1/A1_a/bsu_nucl-bd"/>
</dbReference>
<dbReference type="InterPro" id="IPR027417">
    <property type="entry name" value="P-loop_NTPase"/>
</dbReference>
<dbReference type="NCBIfam" id="TIGR00962">
    <property type="entry name" value="atpA"/>
    <property type="match status" value="1"/>
</dbReference>
<dbReference type="NCBIfam" id="NF009884">
    <property type="entry name" value="PRK13343.1"/>
    <property type="match status" value="1"/>
</dbReference>
<dbReference type="PANTHER" id="PTHR48082">
    <property type="entry name" value="ATP SYNTHASE SUBUNIT ALPHA, MITOCHONDRIAL"/>
    <property type="match status" value="1"/>
</dbReference>
<dbReference type="PANTHER" id="PTHR48082:SF2">
    <property type="entry name" value="ATP SYNTHASE SUBUNIT ALPHA, MITOCHONDRIAL"/>
    <property type="match status" value="1"/>
</dbReference>
<dbReference type="Pfam" id="PF00006">
    <property type="entry name" value="ATP-synt_ab"/>
    <property type="match status" value="1"/>
</dbReference>
<dbReference type="Pfam" id="PF00306">
    <property type="entry name" value="ATP-synt_ab_C"/>
    <property type="match status" value="1"/>
</dbReference>
<dbReference type="Pfam" id="PF02874">
    <property type="entry name" value="ATP-synt_ab_N"/>
    <property type="match status" value="1"/>
</dbReference>
<dbReference type="PIRSF" id="PIRSF039088">
    <property type="entry name" value="F_ATPase_subunit_alpha"/>
    <property type="match status" value="1"/>
</dbReference>
<dbReference type="SUPFAM" id="SSF47917">
    <property type="entry name" value="C-terminal domain of alpha and beta subunits of F1 ATP synthase"/>
    <property type="match status" value="1"/>
</dbReference>
<dbReference type="SUPFAM" id="SSF50615">
    <property type="entry name" value="N-terminal domain of alpha and beta subunits of F1 ATP synthase"/>
    <property type="match status" value="1"/>
</dbReference>
<dbReference type="SUPFAM" id="SSF52540">
    <property type="entry name" value="P-loop containing nucleoside triphosphate hydrolases"/>
    <property type="match status" value="1"/>
</dbReference>
<dbReference type="PROSITE" id="PS00152">
    <property type="entry name" value="ATPASE_ALPHA_BETA"/>
    <property type="match status" value="1"/>
</dbReference>
<sequence>MSIRAEEISALIKQQIENYQSEIEVSDVGTVIQVGDGIARAHGLDNVMAGELVEFSNGVMGLAQNLEENNVGIIILGPYTEIREGDEVRRTGRIMQVPVGKELIGRVVNPLGQPVDGLGPINTTNTRPIESPAPGVMDRKSVHEPLQTGIKAIDALVPIGRGQRELIIGDRQTGKTAVALDTIINQKDEDMICIYVAIGQKESTVRNVVETLRKHGALEYTIVVTASASQPAPLLYLAPYAGVTMGEEFMYNGKHVLVVYDDLSKQAAAYRELSLLLRRPPGREAYPGDVFYLHSRLLERAAKLSDAKGGGSLTALPFIETQAGDVSAYIPTNVISITDGQIFLQSDLFFSGVRPAIDAGTSVSRVGGSAQIKAMSKVSGTLRLDLASYRELEAFAQFGSDLDKATQAKLNRGARTVEVLKQGLHKPLRVEKQVIILYALTRGFLDDIPVVDITRFEEEFHAWLDSNATDLLEEIRTTKKLADDDKFAAAINGFKKVFVASE</sequence>
<gene>
    <name evidence="1" type="primary">atpA</name>
    <name type="ordered locus">BCAH820_5398</name>
</gene>
<protein>
    <recommendedName>
        <fullName evidence="1">ATP synthase subunit alpha</fullName>
        <ecNumber evidence="1">7.1.2.2</ecNumber>
    </recommendedName>
    <alternativeName>
        <fullName evidence="1">ATP synthase F1 sector subunit alpha</fullName>
    </alternativeName>
    <alternativeName>
        <fullName evidence="1">F-ATPase subunit alpha</fullName>
    </alternativeName>
</protein>
<accession>B7JGN2</accession>
<proteinExistence type="inferred from homology"/>
<reference key="1">
    <citation type="submission" date="2008-10" db="EMBL/GenBank/DDBJ databases">
        <title>Genome sequence of Bacillus cereus AH820.</title>
        <authorList>
            <person name="Dodson R.J."/>
            <person name="Durkin A.S."/>
            <person name="Rosovitz M.J."/>
            <person name="Rasko D.A."/>
            <person name="Hoffmaster A."/>
            <person name="Ravel J."/>
            <person name="Sutton G."/>
        </authorList>
    </citation>
    <scope>NUCLEOTIDE SEQUENCE [LARGE SCALE GENOMIC DNA]</scope>
    <source>
        <strain>AH820</strain>
    </source>
</reference>
<evidence type="ECO:0000255" key="1">
    <source>
        <dbReference type="HAMAP-Rule" id="MF_01346"/>
    </source>
</evidence>
<evidence type="ECO:0000256" key="2">
    <source>
        <dbReference type="SAM" id="MobiDB-lite"/>
    </source>
</evidence>
<feature type="chain" id="PRO_1000143341" description="ATP synthase subunit alpha">
    <location>
        <begin position="1"/>
        <end position="502"/>
    </location>
</feature>
<feature type="region of interest" description="Disordered" evidence="2">
    <location>
        <begin position="115"/>
        <end position="135"/>
    </location>
</feature>
<feature type="binding site" evidence="1">
    <location>
        <begin position="169"/>
        <end position="176"/>
    </location>
    <ligand>
        <name>ATP</name>
        <dbReference type="ChEBI" id="CHEBI:30616"/>
    </ligand>
</feature>
<feature type="site" description="Required for activity" evidence="1">
    <location>
        <position position="362"/>
    </location>
</feature>
<organism>
    <name type="scientific">Bacillus cereus (strain AH820)</name>
    <dbReference type="NCBI Taxonomy" id="405535"/>
    <lineage>
        <taxon>Bacteria</taxon>
        <taxon>Bacillati</taxon>
        <taxon>Bacillota</taxon>
        <taxon>Bacilli</taxon>
        <taxon>Bacillales</taxon>
        <taxon>Bacillaceae</taxon>
        <taxon>Bacillus</taxon>
        <taxon>Bacillus cereus group</taxon>
    </lineage>
</organism>
<comment type="function">
    <text evidence="1">Produces ATP from ADP in the presence of a proton gradient across the membrane. The alpha chain is a regulatory subunit.</text>
</comment>
<comment type="catalytic activity">
    <reaction evidence="1">
        <text>ATP + H2O + 4 H(+)(in) = ADP + phosphate + 5 H(+)(out)</text>
        <dbReference type="Rhea" id="RHEA:57720"/>
        <dbReference type="ChEBI" id="CHEBI:15377"/>
        <dbReference type="ChEBI" id="CHEBI:15378"/>
        <dbReference type="ChEBI" id="CHEBI:30616"/>
        <dbReference type="ChEBI" id="CHEBI:43474"/>
        <dbReference type="ChEBI" id="CHEBI:456216"/>
        <dbReference type="EC" id="7.1.2.2"/>
    </reaction>
</comment>
<comment type="subunit">
    <text evidence="1">F-type ATPases have 2 components, CF(1) - the catalytic core - and CF(0) - the membrane proton channel. CF(1) has five subunits: alpha(3), beta(3), gamma(1), delta(1), epsilon(1). CF(0) has three main subunits: a(1), b(2) and c(9-12). The alpha and beta chains form an alternating ring which encloses part of the gamma chain. CF(1) is attached to CF(0) by a central stalk formed by the gamma and epsilon chains, while a peripheral stalk is formed by the delta and b chains.</text>
</comment>
<comment type="subcellular location">
    <subcellularLocation>
        <location evidence="1">Cell membrane</location>
        <topology evidence="1">Peripheral membrane protein</topology>
    </subcellularLocation>
</comment>
<comment type="similarity">
    <text evidence="1">Belongs to the ATPase alpha/beta chains family.</text>
</comment>
<name>ATPA_BACC0</name>
<keyword id="KW-0066">ATP synthesis</keyword>
<keyword id="KW-0067">ATP-binding</keyword>
<keyword id="KW-1003">Cell membrane</keyword>
<keyword id="KW-0139">CF(1)</keyword>
<keyword id="KW-0375">Hydrogen ion transport</keyword>
<keyword id="KW-0406">Ion transport</keyword>
<keyword id="KW-0472">Membrane</keyword>
<keyword id="KW-0547">Nucleotide-binding</keyword>
<keyword id="KW-1278">Translocase</keyword>
<keyword id="KW-0813">Transport</keyword>